<organism>
    <name type="scientific">Lactobacillus johnsonii (strain CNCM I-12250 / La1 / NCC 533)</name>
    <dbReference type="NCBI Taxonomy" id="257314"/>
    <lineage>
        <taxon>Bacteria</taxon>
        <taxon>Bacillati</taxon>
        <taxon>Bacillota</taxon>
        <taxon>Bacilli</taxon>
        <taxon>Lactobacillales</taxon>
        <taxon>Lactobacillaceae</taxon>
        <taxon>Lactobacillus</taxon>
    </lineage>
</organism>
<gene>
    <name evidence="1" type="primary">asnA</name>
    <name type="ordered locus">LJ_0511</name>
</gene>
<sequence>MTLILPKDYHPSLTIRDTEAAIVFIRENFQDKIADKLNLQRMSAPMFVEKSTGLNDNLNGIERPVAFDMKAMPDDTIEVVHSLAKWKRLALKRYGFGMHEGLYTNMNAIRRDEDLDNFHSIYVDQWDWEKIIAKEERNIETLKTTVKQIFKAIKETEKELSARYPGSTYRLPSDITFITTQELEDRWPDLAPEEREDKIAKEKKAVFLMKIGDKLKRSGKPHDGRAPDYDDWELNGDLLFWYEPLKRKIEISSMGIRVSEESLKEQLKKAHTEERSDLPFHKMLLEGKLPYTIGGGIGQSRLCMLLLGKAHIGEVQASIWPPEMIESCKAADIKIL</sequence>
<evidence type="ECO:0000255" key="1">
    <source>
        <dbReference type="HAMAP-Rule" id="MF_00555"/>
    </source>
</evidence>
<feature type="chain" id="PRO_0000195880" description="Aspartate--ammonia ligase">
    <location>
        <begin position="1"/>
        <end position="336"/>
    </location>
</feature>
<accession>P61190</accession>
<comment type="catalytic activity">
    <reaction evidence="1">
        <text>L-aspartate + NH4(+) + ATP = L-asparagine + AMP + diphosphate + H(+)</text>
        <dbReference type="Rhea" id="RHEA:11372"/>
        <dbReference type="ChEBI" id="CHEBI:15378"/>
        <dbReference type="ChEBI" id="CHEBI:28938"/>
        <dbReference type="ChEBI" id="CHEBI:29991"/>
        <dbReference type="ChEBI" id="CHEBI:30616"/>
        <dbReference type="ChEBI" id="CHEBI:33019"/>
        <dbReference type="ChEBI" id="CHEBI:58048"/>
        <dbReference type="ChEBI" id="CHEBI:456215"/>
        <dbReference type="EC" id="6.3.1.1"/>
    </reaction>
</comment>
<comment type="pathway">
    <text evidence="1">Amino-acid biosynthesis; L-asparagine biosynthesis; L-asparagine from L-aspartate (ammonia route): step 1/1.</text>
</comment>
<comment type="subcellular location">
    <subcellularLocation>
        <location evidence="1">Cytoplasm</location>
    </subcellularLocation>
</comment>
<comment type="similarity">
    <text evidence="1">Belongs to the class-II aminoacyl-tRNA synthetase family. AsnA subfamily.</text>
</comment>
<dbReference type="EC" id="6.3.1.1" evidence="1"/>
<dbReference type="EMBL" id="AE017198">
    <property type="protein sequence ID" value="AAS09710.1"/>
    <property type="molecule type" value="Genomic_DNA"/>
</dbReference>
<dbReference type="RefSeq" id="WP_011162553.1">
    <property type="nucleotide sequence ID" value="NC_005362.1"/>
</dbReference>
<dbReference type="SMR" id="P61190"/>
<dbReference type="KEGG" id="ljo:LJ_0511"/>
<dbReference type="eggNOG" id="COG2502">
    <property type="taxonomic scope" value="Bacteria"/>
</dbReference>
<dbReference type="HOGENOM" id="CLU_071543_0_0_9"/>
<dbReference type="UniPathway" id="UPA00134">
    <property type="reaction ID" value="UER00194"/>
</dbReference>
<dbReference type="Proteomes" id="UP000000581">
    <property type="component" value="Chromosome"/>
</dbReference>
<dbReference type="GO" id="GO:0005829">
    <property type="term" value="C:cytosol"/>
    <property type="evidence" value="ECO:0007669"/>
    <property type="project" value="TreeGrafter"/>
</dbReference>
<dbReference type="GO" id="GO:0004071">
    <property type="term" value="F:aspartate-ammonia ligase activity"/>
    <property type="evidence" value="ECO:0007669"/>
    <property type="project" value="UniProtKB-UniRule"/>
</dbReference>
<dbReference type="GO" id="GO:0005524">
    <property type="term" value="F:ATP binding"/>
    <property type="evidence" value="ECO:0007669"/>
    <property type="project" value="UniProtKB-UniRule"/>
</dbReference>
<dbReference type="GO" id="GO:0140096">
    <property type="term" value="F:catalytic activity, acting on a protein"/>
    <property type="evidence" value="ECO:0007669"/>
    <property type="project" value="UniProtKB-ARBA"/>
</dbReference>
<dbReference type="GO" id="GO:0016740">
    <property type="term" value="F:transferase activity"/>
    <property type="evidence" value="ECO:0007669"/>
    <property type="project" value="UniProtKB-ARBA"/>
</dbReference>
<dbReference type="GO" id="GO:0070981">
    <property type="term" value="P:L-asparagine biosynthetic process"/>
    <property type="evidence" value="ECO:0007669"/>
    <property type="project" value="UniProtKB-UniRule"/>
</dbReference>
<dbReference type="CDD" id="cd00645">
    <property type="entry name" value="AsnA"/>
    <property type="match status" value="1"/>
</dbReference>
<dbReference type="Gene3D" id="3.30.930.10">
    <property type="entry name" value="Bira Bifunctional Protein, Domain 2"/>
    <property type="match status" value="1"/>
</dbReference>
<dbReference type="HAMAP" id="MF_00555">
    <property type="entry name" value="AsnA"/>
    <property type="match status" value="1"/>
</dbReference>
<dbReference type="InterPro" id="IPR006195">
    <property type="entry name" value="aa-tRNA-synth_II"/>
</dbReference>
<dbReference type="InterPro" id="IPR045864">
    <property type="entry name" value="aa-tRNA-synth_II/BPL/LPL"/>
</dbReference>
<dbReference type="InterPro" id="IPR004618">
    <property type="entry name" value="AsnA"/>
</dbReference>
<dbReference type="NCBIfam" id="TIGR00669">
    <property type="entry name" value="asnA"/>
    <property type="match status" value="1"/>
</dbReference>
<dbReference type="PANTHER" id="PTHR30073">
    <property type="entry name" value="ASPARTATE--AMMONIA LIGASE"/>
    <property type="match status" value="1"/>
</dbReference>
<dbReference type="PANTHER" id="PTHR30073:SF5">
    <property type="entry name" value="ASPARTATE--AMMONIA LIGASE"/>
    <property type="match status" value="1"/>
</dbReference>
<dbReference type="Pfam" id="PF03590">
    <property type="entry name" value="AsnA"/>
    <property type="match status" value="1"/>
</dbReference>
<dbReference type="PIRSF" id="PIRSF001555">
    <property type="entry name" value="Asp_ammon_ligase"/>
    <property type="match status" value="1"/>
</dbReference>
<dbReference type="SUPFAM" id="SSF55681">
    <property type="entry name" value="Class II aaRS and biotin synthetases"/>
    <property type="match status" value="1"/>
</dbReference>
<dbReference type="PROSITE" id="PS50862">
    <property type="entry name" value="AA_TRNA_LIGASE_II"/>
    <property type="match status" value="1"/>
</dbReference>
<reference key="1">
    <citation type="journal article" date="2004" name="Proc. Natl. Acad. Sci. U.S.A.">
        <title>The genome sequence of the probiotic intestinal bacterium Lactobacillus johnsonii NCC 533.</title>
        <authorList>
            <person name="Pridmore R.D."/>
            <person name="Berger B."/>
            <person name="Desiere F."/>
            <person name="Vilanova D."/>
            <person name="Barretto C."/>
            <person name="Pittet A.-C."/>
            <person name="Zwahlen M.-C."/>
            <person name="Rouvet M."/>
            <person name="Altermann E."/>
            <person name="Barrangou R."/>
            <person name="Mollet B."/>
            <person name="Mercenier A."/>
            <person name="Klaenhammer T."/>
            <person name="Arigoni F."/>
            <person name="Schell M.A."/>
        </authorList>
    </citation>
    <scope>NUCLEOTIDE SEQUENCE [LARGE SCALE GENOMIC DNA]</scope>
    <source>
        <strain>CNCM I-1225 / La1 / NCC 533</strain>
    </source>
</reference>
<name>ASNA_LACJO</name>
<proteinExistence type="inferred from homology"/>
<keyword id="KW-0028">Amino-acid biosynthesis</keyword>
<keyword id="KW-0061">Asparagine biosynthesis</keyword>
<keyword id="KW-0067">ATP-binding</keyword>
<keyword id="KW-0963">Cytoplasm</keyword>
<keyword id="KW-0436">Ligase</keyword>
<keyword id="KW-0547">Nucleotide-binding</keyword>
<protein>
    <recommendedName>
        <fullName evidence="1">Aspartate--ammonia ligase</fullName>
        <ecNumber evidence="1">6.3.1.1</ecNumber>
    </recommendedName>
    <alternativeName>
        <fullName evidence="1">Asparagine synthetase A</fullName>
    </alternativeName>
</protein>